<name>PMA_AVESA</name>
<sequence>WGEQEASILVPGDIVSIKLGDIVPADARIDQSGLTGESLPVTKNPGDEVFSGSTCKTGTLTLNKGIVGMTGDGVNDAPALKTLHGLQAPESTSLNLPNDKELSEIAEQAK</sequence>
<accession>Q7M290</accession>
<feature type="chain" id="PRO_0000046286" description="Plasma membrane ATPase">
    <location>
        <begin position="1" status="less than"/>
        <end position="110" status="greater than"/>
    </location>
</feature>
<feature type="region of interest" description="Disordered" evidence="3">
    <location>
        <begin position="88"/>
        <end position="110"/>
    </location>
</feature>
<feature type="compositionally biased region" description="Basic and acidic residues" evidence="3">
    <location>
        <begin position="98"/>
        <end position="110"/>
    </location>
</feature>
<feature type="binding site" evidence="2">
    <location>
        <position position="72"/>
    </location>
    <ligand>
        <name>Mg(2+)</name>
        <dbReference type="ChEBI" id="CHEBI:18420"/>
    </ligand>
</feature>
<feature type="binding site" evidence="2">
    <location>
        <position position="76"/>
    </location>
    <ligand>
        <name>Mg(2+)</name>
        <dbReference type="ChEBI" id="CHEBI:18420"/>
    </ligand>
</feature>
<feature type="unsure residue" description="S or A" evidence="4">
    <location>
        <position position="103"/>
    </location>
</feature>
<feature type="non-consecutive residues" evidence="5">
    <location>
        <begin position="28"/>
        <end position="29"/>
    </location>
</feature>
<feature type="non-consecutive residues" evidence="5">
    <location>
        <begin position="56"/>
        <end position="57"/>
    </location>
</feature>
<feature type="non-consecutive residues" evidence="5">
    <location>
        <begin position="64"/>
        <end position="65"/>
    </location>
</feature>
<feature type="non-consecutive residues" evidence="5">
    <location>
        <begin position="81"/>
        <end position="82"/>
    </location>
</feature>
<feature type="non-consecutive residues" evidence="5">
    <location>
        <begin position="100"/>
        <end position="101"/>
    </location>
</feature>
<feature type="non-terminal residue" evidence="6">
    <location>
        <position position="1"/>
    </location>
</feature>
<feature type="non-terminal residue" evidence="5">
    <location>
        <position position="110"/>
    </location>
</feature>
<protein>
    <recommendedName>
        <fullName>Plasma membrane ATPase</fullName>
        <ecNumber>7.1.2.1</ecNumber>
    </recommendedName>
    <alternativeName>
        <fullName>Proton pump</fullName>
    </alternativeName>
</protein>
<keyword id="KW-0067">ATP-binding</keyword>
<keyword id="KW-1003">Cell membrane</keyword>
<keyword id="KW-0903">Direct protein sequencing</keyword>
<keyword id="KW-0375">Hydrogen ion transport</keyword>
<keyword id="KW-0406">Ion transport</keyword>
<keyword id="KW-0460">Magnesium</keyword>
<keyword id="KW-0472">Membrane</keyword>
<keyword id="KW-0479">Metal-binding</keyword>
<keyword id="KW-0547">Nucleotide-binding</keyword>
<keyword id="KW-1278">Translocase</keyword>
<keyword id="KW-0812">Transmembrane</keyword>
<keyword id="KW-0813">Transport</keyword>
<proteinExistence type="evidence at protein level"/>
<evidence type="ECO:0000250" key="1"/>
<evidence type="ECO:0000250" key="2">
    <source>
        <dbReference type="UniProtKB" id="P83970"/>
    </source>
</evidence>
<evidence type="ECO:0000256" key="3">
    <source>
        <dbReference type="SAM" id="MobiDB-lite"/>
    </source>
</evidence>
<evidence type="ECO:0000269" key="4">
    <source>
    </source>
</evidence>
<evidence type="ECO:0000305" key="5"/>
<evidence type="ECO:0000312" key="6">
    <source>
        <dbReference type="PIR" id="JA0154"/>
    </source>
</evidence>
<comment type="function">
    <text evidence="1">The plasma membrane ATPase of plants and fungi is a hydrogen ion pump. The proton gradient it generates drives the active transport of nutrients by H(+)-symport. The resulting external acidification and/or internal alkinization may mediate growth responses (By similarity).</text>
</comment>
<comment type="catalytic activity">
    <reaction>
        <text>ATP + H2O + H(+)(in) = ADP + phosphate + 2 H(+)(out)</text>
        <dbReference type="Rhea" id="RHEA:20852"/>
        <dbReference type="ChEBI" id="CHEBI:15377"/>
        <dbReference type="ChEBI" id="CHEBI:15378"/>
        <dbReference type="ChEBI" id="CHEBI:30616"/>
        <dbReference type="ChEBI" id="CHEBI:43474"/>
        <dbReference type="ChEBI" id="CHEBI:456216"/>
        <dbReference type="EC" id="7.1.2.1"/>
    </reaction>
</comment>
<comment type="subcellular location">
    <subcellularLocation>
        <location evidence="4">Cell membrane</location>
        <topology evidence="4">Multi-pass membrane protein</topology>
    </subcellularLocation>
</comment>
<comment type="PTM">
    <text evidence="4">The N-terminus is blocked.</text>
</comment>
<comment type="similarity">
    <text evidence="5">Belongs to the cation transport ATPase (P-type) (TC 3.A.3) family. Type IIIA subfamily.</text>
</comment>
<dbReference type="EC" id="7.1.2.1"/>
<dbReference type="PIR" id="JA0154">
    <property type="entry name" value="JA0154"/>
</dbReference>
<dbReference type="SMR" id="Q7M290"/>
<dbReference type="GO" id="GO:0005886">
    <property type="term" value="C:plasma membrane"/>
    <property type="evidence" value="ECO:0000314"/>
    <property type="project" value="UniProtKB"/>
</dbReference>
<dbReference type="GO" id="GO:0005524">
    <property type="term" value="F:ATP binding"/>
    <property type="evidence" value="ECO:0007669"/>
    <property type="project" value="UniProtKB-KW"/>
</dbReference>
<dbReference type="GO" id="GO:0046872">
    <property type="term" value="F:metal ion binding"/>
    <property type="evidence" value="ECO:0007669"/>
    <property type="project" value="UniProtKB-KW"/>
</dbReference>
<dbReference type="GO" id="GO:0008553">
    <property type="term" value="F:P-type proton-exporting transporter activity"/>
    <property type="evidence" value="ECO:0000250"/>
    <property type="project" value="UniProtKB"/>
</dbReference>
<dbReference type="GO" id="GO:1902600">
    <property type="term" value="P:proton transmembrane transport"/>
    <property type="evidence" value="ECO:0000250"/>
    <property type="project" value="UniProtKB"/>
</dbReference>
<dbReference type="Gene3D" id="2.70.150.10">
    <property type="entry name" value="Calcium-transporting ATPase, cytoplasmic transduction domain A"/>
    <property type="match status" value="1"/>
</dbReference>
<dbReference type="Gene3D" id="3.40.50.1000">
    <property type="entry name" value="HAD superfamily/HAD-like"/>
    <property type="match status" value="1"/>
</dbReference>
<dbReference type="InterPro" id="IPR008250">
    <property type="entry name" value="ATPase_P-typ_transduc_dom_A_sf"/>
</dbReference>
<dbReference type="InterPro" id="IPR023214">
    <property type="entry name" value="HAD_sf"/>
</dbReference>
<dbReference type="PANTHER" id="PTHR42861">
    <property type="entry name" value="CALCIUM-TRANSPORTING ATPASE"/>
    <property type="match status" value="1"/>
</dbReference>
<dbReference type="Pfam" id="PF00122">
    <property type="entry name" value="E1-E2_ATPase"/>
    <property type="match status" value="1"/>
</dbReference>
<dbReference type="SUPFAM" id="SSF81653">
    <property type="entry name" value="Calcium ATPase, transduction domain A"/>
    <property type="match status" value="1"/>
</dbReference>
<reference key="1">
    <citation type="journal article" date="1988" name="Plant Physiol.">
        <title>Isolation and sequence of tryptic peptides from the proton-pumping ATPase of the oat plasma membrane.</title>
        <authorList>
            <person name="Schaller G.E."/>
            <person name="Sussman M.R."/>
        </authorList>
    </citation>
    <scope>PROTEIN SEQUENCE</scope>
    <scope>SUBCELLULAR LOCATION</scope>
    <source>
        <tissue>Root</tissue>
    </source>
</reference>
<organism>
    <name type="scientific">Avena sativa</name>
    <name type="common">Oat</name>
    <dbReference type="NCBI Taxonomy" id="4498"/>
    <lineage>
        <taxon>Eukaryota</taxon>
        <taxon>Viridiplantae</taxon>
        <taxon>Streptophyta</taxon>
        <taxon>Embryophyta</taxon>
        <taxon>Tracheophyta</taxon>
        <taxon>Spermatophyta</taxon>
        <taxon>Magnoliopsida</taxon>
        <taxon>Liliopsida</taxon>
        <taxon>Poales</taxon>
        <taxon>Poaceae</taxon>
        <taxon>BOP clade</taxon>
        <taxon>Pooideae</taxon>
        <taxon>Poodae</taxon>
        <taxon>Poeae</taxon>
        <taxon>Poeae Chloroplast Group 1 (Aveneae type)</taxon>
        <taxon>Aveninae</taxon>
        <taxon>Avena</taxon>
    </lineage>
</organism>